<comment type="function">
    <text evidence="2">Participates in various redox reactions through the reversible oxidation of the active center dithiol to a disulfide. The H form is known to activate a number of cytosolic enzymes (By similarity).</text>
</comment>
<comment type="subcellular location">
    <subcellularLocation>
        <location evidence="1">Cytoplasm</location>
    </subcellularLocation>
</comment>
<comment type="similarity">
    <text evidence="3">Belongs to the thioredoxin family. Plant H-type subfamily.</text>
</comment>
<feature type="chain" id="PRO_0000120059" description="Thioredoxin H-type">
    <location>
        <begin position="1" status="less than"/>
        <end position="26" status="greater than"/>
    </location>
</feature>
<feature type="non-consecutive residues" evidence="4">
    <location>
        <begin position="11"/>
        <end position="12"/>
    </location>
</feature>
<feature type="non-terminal residue">
    <location>
        <position position="1"/>
    </location>
</feature>
<feature type="non-terminal residue">
    <location>
        <position position="26"/>
    </location>
</feature>
<proteinExistence type="evidence at protein level"/>
<accession>P84564</accession>
<sequence length="26" mass="2670">MIAPIFAELAKTVGADKDGLPTLVAK</sequence>
<protein>
    <recommendedName>
        <fullName>Thioredoxin H-type</fullName>
        <shortName>Trx-H</shortName>
    </recommendedName>
</protein>
<evidence type="ECO:0000250" key="1"/>
<evidence type="ECO:0000250" key="2">
    <source>
        <dbReference type="UniProtKB" id="O64394"/>
    </source>
</evidence>
<evidence type="ECO:0000255" key="3"/>
<evidence type="ECO:0000305" key="4"/>
<dbReference type="Proteomes" id="UP000694918">
    <property type="component" value="Unplaced"/>
</dbReference>
<dbReference type="GO" id="GO:0005737">
    <property type="term" value="C:cytoplasm"/>
    <property type="evidence" value="ECO:0007669"/>
    <property type="project" value="UniProtKB-SubCell"/>
</dbReference>
<name>TRXH_POPEU</name>
<organism>
    <name type="scientific">Populus euphratica</name>
    <name type="common">Euphrates poplar</name>
    <dbReference type="NCBI Taxonomy" id="75702"/>
    <lineage>
        <taxon>Eukaryota</taxon>
        <taxon>Viridiplantae</taxon>
        <taxon>Streptophyta</taxon>
        <taxon>Embryophyta</taxon>
        <taxon>Tracheophyta</taxon>
        <taxon>Spermatophyta</taxon>
        <taxon>Magnoliopsida</taxon>
        <taxon>eudicotyledons</taxon>
        <taxon>Gunneridae</taxon>
        <taxon>Pentapetalae</taxon>
        <taxon>rosids</taxon>
        <taxon>fabids</taxon>
        <taxon>Malpighiales</taxon>
        <taxon>Salicaceae</taxon>
        <taxon>Saliceae</taxon>
        <taxon>Populus</taxon>
    </lineage>
</organism>
<reference key="1">
    <citation type="journal article" date="2006" name="Ann. Bot.">
        <title>Proteome profiling of Populus euphratica Oliv. upon heat stress.</title>
        <authorList>
            <person name="Ferreira S."/>
            <person name="Hjernoe K."/>
            <person name="Larsen M."/>
            <person name="Wingsle G."/>
            <person name="Larsen P."/>
            <person name="Fey S."/>
            <person name="Roepstorff P."/>
            <person name="Pais M.S."/>
        </authorList>
    </citation>
    <scope>PROTEIN SEQUENCE</scope>
    <source>
        <tissue>Leaf</tissue>
    </source>
</reference>
<keyword id="KW-0963">Cytoplasm</keyword>
<keyword id="KW-0903">Direct protein sequencing</keyword>
<keyword id="KW-0249">Electron transport</keyword>
<keyword id="KW-0676">Redox-active center</keyword>
<keyword id="KW-1185">Reference proteome</keyword>
<keyword id="KW-0813">Transport</keyword>